<dbReference type="EC" id="2.2.1.7" evidence="1"/>
<dbReference type="EMBL" id="CP000611">
    <property type="protein sequence ID" value="ABQ74484.1"/>
    <property type="molecule type" value="Genomic_DNA"/>
</dbReference>
<dbReference type="RefSeq" id="WP_003413891.1">
    <property type="nucleotide sequence ID" value="NZ_CP016972.1"/>
</dbReference>
<dbReference type="SMR" id="A5U634"/>
<dbReference type="KEGG" id="mra:MRA_2710"/>
<dbReference type="eggNOG" id="COG1154">
    <property type="taxonomic scope" value="Bacteria"/>
</dbReference>
<dbReference type="HOGENOM" id="CLU_009227_1_4_11"/>
<dbReference type="UniPathway" id="UPA00064">
    <property type="reaction ID" value="UER00091"/>
</dbReference>
<dbReference type="Proteomes" id="UP000001988">
    <property type="component" value="Chromosome"/>
</dbReference>
<dbReference type="GO" id="GO:0005829">
    <property type="term" value="C:cytosol"/>
    <property type="evidence" value="ECO:0007669"/>
    <property type="project" value="TreeGrafter"/>
</dbReference>
<dbReference type="GO" id="GO:0008661">
    <property type="term" value="F:1-deoxy-D-xylulose-5-phosphate synthase activity"/>
    <property type="evidence" value="ECO:0007669"/>
    <property type="project" value="UniProtKB-UniRule"/>
</dbReference>
<dbReference type="GO" id="GO:0000287">
    <property type="term" value="F:magnesium ion binding"/>
    <property type="evidence" value="ECO:0007669"/>
    <property type="project" value="UniProtKB-UniRule"/>
</dbReference>
<dbReference type="GO" id="GO:0030976">
    <property type="term" value="F:thiamine pyrophosphate binding"/>
    <property type="evidence" value="ECO:0007669"/>
    <property type="project" value="UniProtKB-UniRule"/>
</dbReference>
<dbReference type="GO" id="GO:0052865">
    <property type="term" value="P:1-deoxy-D-xylulose 5-phosphate biosynthetic process"/>
    <property type="evidence" value="ECO:0007669"/>
    <property type="project" value="UniProtKB-UniPathway"/>
</dbReference>
<dbReference type="GO" id="GO:0019288">
    <property type="term" value="P:isopentenyl diphosphate biosynthetic process, methylerythritol 4-phosphate pathway"/>
    <property type="evidence" value="ECO:0007669"/>
    <property type="project" value="TreeGrafter"/>
</dbReference>
<dbReference type="GO" id="GO:0016114">
    <property type="term" value="P:terpenoid biosynthetic process"/>
    <property type="evidence" value="ECO:0007669"/>
    <property type="project" value="UniProtKB-UniRule"/>
</dbReference>
<dbReference type="GO" id="GO:0009228">
    <property type="term" value="P:thiamine biosynthetic process"/>
    <property type="evidence" value="ECO:0007669"/>
    <property type="project" value="UniProtKB-UniRule"/>
</dbReference>
<dbReference type="CDD" id="cd02007">
    <property type="entry name" value="TPP_DXS"/>
    <property type="match status" value="1"/>
</dbReference>
<dbReference type="CDD" id="cd07033">
    <property type="entry name" value="TPP_PYR_DXS_TK_like"/>
    <property type="match status" value="1"/>
</dbReference>
<dbReference type="FunFam" id="3.40.50.920:FF:000002">
    <property type="entry name" value="1-deoxy-D-xylulose-5-phosphate synthase"/>
    <property type="match status" value="1"/>
</dbReference>
<dbReference type="FunFam" id="3.40.50.970:FF:000005">
    <property type="entry name" value="1-deoxy-D-xylulose-5-phosphate synthase"/>
    <property type="match status" value="1"/>
</dbReference>
<dbReference type="Gene3D" id="3.40.50.920">
    <property type="match status" value="1"/>
</dbReference>
<dbReference type="Gene3D" id="3.40.50.970">
    <property type="match status" value="2"/>
</dbReference>
<dbReference type="HAMAP" id="MF_00315">
    <property type="entry name" value="DXP_synth"/>
    <property type="match status" value="1"/>
</dbReference>
<dbReference type="InterPro" id="IPR005477">
    <property type="entry name" value="Dxylulose-5-P_synthase"/>
</dbReference>
<dbReference type="InterPro" id="IPR029061">
    <property type="entry name" value="THDP-binding"/>
</dbReference>
<dbReference type="InterPro" id="IPR009014">
    <property type="entry name" value="Transketo_C/PFOR_II"/>
</dbReference>
<dbReference type="InterPro" id="IPR005475">
    <property type="entry name" value="Transketolase-like_Pyr-bd"/>
</dbReference>
<dbReference type="InterPro" id="IPR020826">
    <property type="entry name" value="Transketolase_BS"/>
</dbReference>
<dbReference type="InterPro" id="IPR033248">
    <property type="entry name" value="Transketolase_C"/>
</dbReference>
<dbReference type="InterPro" id="IPR049557">
    <property type="entry name" value="Transketolase_CS"/>
</dbReference>
<dbReference type="NCBIfam" id="TIGR00204">
    <property type="entry name" value="dxs"/>
    <property type="match status" value="1"/>
</dbReference>
<dbReference type="NCBIfam" id="NF003933">
    <property type="entry name" value="PRK05444.2-2"/>
    <property type="match status" value="1"/>
</dbReference>
<dbReference type="PANTHER" id="PTHR43322">
    <property type="entry name" value="1-D-DEOXYXYLULOSE 5-PHOSPHATE SYNTHASE-RELATED"/>
    <property type="match status" value="1"/>
</dbReference>
<dbReference type="PANTHER" id="PTHR43322:SF5">
    <property type="entry name" value="1-DEOXY-D-XYLULOSE-5-PHOSPHATE SYNTHASE, CHLOROPLASTIC"/>
    <property type="match status" value="1"/>
</dbReference>
<dbReference type="Pfam" id="PF13292">
    <property type="entry name" value="DXP_synthase_N"/>
    <property type="match status" value="1"/>
</dbReference>
<dbReference type="Pfam" id="PF02779">
    <property type="entry name" value="Transket_pyr"/>
    <property type="match status" value="1"/>
</dbReference>
<dbReference type="Pfam" id="PF02780">
    <property type="entry name" value="Transketolase_C"/>
    <property type="match status" value="1"/>
</dbReference>
<dbReference type="SMART" id="SM00861">
    <property type="entry name" value="Transket_pyr"/>
    <property type="match status" value="1"/>
</dbReference>
<dbReference type="SUPFAM" id="SSF52518">
    <property type="entry name" value="Thiamin diphosphate-binding fold (THDP-binding)"/>
    <property type="match status" value="2"/>
</dbReference>
<dbReference type="SUPFAM" id="SSF52922">
    <property type="entry name" value="TK C-terminal domain-like"/>
    <property type="match status" value="1"/>
</dbReference>
<dbReference type="PROSITE" id="PS00801">
    <property type="entry name" value="TRANSKETOLASE_1"/>
    <property type="match status" value="1"/>
</dbReference>
<dbReference type="PROSITE" id="PS00802">
    <property type="entry name" value="TRANSKETOLASE_2"/>
    <property type="match status" value="1"/>
</dbReference>
<evidence type="ECO:0000255" key="1">
    <source>
        <dbReference type="HAMAP-Rule" id="MF_00315"/>
    </source>
</evidence>
<reference key="1">
    <citation type="journal article" date="2008" name="PLoS ONE">
        <title>Genetic basis of virulence attenuation revealed by comparative genomic analysis of Mycobacterium tuberculosis strain H37Ra versus H37Rv.</title>
        <authorList>
            <person name="Zheng H."/>
            <person name="Lu L."/>
            <person name="Wang B."/>
            <person name="Pu S."/>
            <person name="Zhang X."/>
            <person name="Zhu G."/>
            <person name="Shi W."/>
            <person name="Zhang L."/>
            <person name="Wang H."/>
            <person name="Wang S."/>
            <person name="Zhao G."/>
            <person name="Zhang Y."/>
        </authorList>
    </citation>
    <scope>NUCLEOTIDE SEQUENCE [LARGE SCALE GENOMIC DNA]</scope>
    <source>
        <strain>ATCC 25177 / H37Ra</strain>
    </source>
</reference>
<gene>
    <name evidence="1" type="primary">dxs</name>
    <name type="ordered locus">MRA_2710</name>
</gene>
<sequence length="638" mass="67885">MLQQIRGPADLQHLSQAQLRELAAEIREFLIHKVAATGGHLGPNLGVVELTLALHRVFDSPHDPIIFDTGHQAYVHKMLTGRSQDFATLRKKGGLSGYPSRAESEHDWVESSHASAALSYADGLAKAFELTGHRNRHVVAVVGDGALTGGMCWEALNNIAASRRPVIIVVNDNGRSYAPTIGGVADHLATLRLQPAYEQALETGRDLVRAVPLVGGLWFRFLHSVKAGIKDSLSPQLLFTDLGLKYVGPVDGHDERAVEVALRSARRFGAPVIVHVVTRKGMGYPPAEADQAEQMHSTVPIDPATGQATKVAGPGWTATFSDALIGYAQKRRDIVAITAAMPGPTGLTAFGQRFPDRLFDVGIAEQHAMTSAAGLAMGGLHPVVAIYSTFLNRAFDQIMMDVALHKLPVTMVLDRAGITGSDGASHNGMWDLSMLGIVPGIRVAAPRDATRLREELGEALDVDDGPTALRFPKGDVGEDISALERRGGVDVLAAPADGLNHDVLLVAIGAFAPMALAVAKRLHNQGIGVTVIDPRWVLPVSDGVRELAVQHKLLVTLEDNGVNGGAGSAVSAALRRAEIDVPCRDVGLPQEFYEHASRSEVLADLGLTDQDVARRITGWVAALGTGVCASDAIPEHLD</sequence>
<feature type="chain" id="PRO_1000019045" description="1-deoxy-D-xylulose-5-phosphate synthase">
    <location>
        <begin position="1"/>
        <end position="638"/>
    </location>
</feature>
<feature type="binding site" evidence="1">
    <location>
        <position position="71"/>
    </location>
    <ligand>
        <name>thiamine diphosphate</name>
        <dbReference type="ChEBI" id="CHEBI:58937"/>
    </ligand>
</feature>
<feature type="binding site" evidence="1">
    <location>
        <begin position="112"/>
        <end position="114"/>
    </location>
    <ligand>
        <name>thiamine diphosphate</name>
        <dbReference type="ChEBI" id="CHEBI:58937"/>
    </ligand>
</feature>
<feature type="binding site" evidence="1">
    <location>
        <position position="144"/>
    </location>
    <ligand>
        <name>Mg(2+)</name>
        <dbReference type="ChEBI" id="CHEBI:18420"/>
    </ligand>
</feature>
<feature type="binding site" evidence="1">
    <location>
        <begin position="145"/>
        <end position="146"/>
    </location>
    <ligand>
        <name>thiamine diphosphate</name>
        <dbReference type="ChEBI" id="CHEBI:58937"/>
    </ligand>
</feature>
<feature type="binding site" evidence="1">
    <location>
        <position position="173"/>
    </location>
    <ligand>
        <name>Mg(2+)</name>
        <dbReference type="ChEBI" id="CHEBI:18420"/>
    </ligand>
</feature>
<feature type="binding site" evidence="1">
    <location>
        <position position="173"/>
    </location>
    <ligand>
        <name>thiamine diphosphate</name>
        <dbReference type="ChEBI" id="CHEBI:58937"/>
    </ligand>
</feature>
<feature type="binding site" evidence="1">
    <location>
        <position position="284"/>
    </location>
    <ligand>
        <name>thiamine diphosphate</name>
        <dbReference type="ChEBI" id="CHEBI:58937"/>
    </ligand>
</feature>
<feature type="binding site" evidence="1">
    <location>
        <position position="365"/>
    </location>
    <ligand>
        <name>thiamine diphosphate</name>
        <dbReference type="ChEBI" id="CHEBI:58937"/>
    </ligand>
</feature>
<keyword id="KW-0414">Isoprene biosynthesis</keyword>
<keyword id="KW-0460">Magnesium</keyword>
<keyword id="KW-0479">Metal-binding</keyword>
<keyword id="KW-1185">Reference proteome</keyword>
<keyword id="KW-0784">Thiamine biosynthesis</keyword>
<keyword id="KW-0786">Thiamine pyrophosphate</keyword>
<keyword id="KW-0808">Transferase</keyword>
<protein>
    <recommendedName>
        <fullName evidence="1">1-deoxy-D-xylulose-5-phosphate synthase</fullName>
        <ecNumber evidence="1">2.2.1.7</ecNumber>
    </recommendedName>
    <alternativeName>
        <fullName evidence="1">1-deoxyxylulose-5-phosphate synthase</fullName>
        <shortName evidence="1">DXP synthase</shortName>
        <shortName evidence="1">DXPS</shortName>
    </alternativeName>
</protein>
<name>DXS_MYCTA</name>
<comment type="function">
    <text evidence="1">Catalyzes the acyloin condensation reaction between C atoms 2 and 3 of pyruvate and glyceraldehyde 3-phosphate to yield 1-deoxy-D-xylulose-5-phosphate (DXP).</text>
</comment>
<comment type="catalytic activity">
    <reaction evidence="1">
        <text>D-glyceraldehyde 3-phosphate + pyruvate + H(+) = 1-deoxy-D-xylulose 5-phosphate + CO2</text>
        <dbReference type="Rhea" id="RHEA:12605"/>
        <dbReference type="ChEBI" id="CHEBI:15361"/>
        <dbReference type="ChEBI" id="CHEBI:15378"/>
        <dbReference type="ChEBI" id="CHEBI:16526"/>
        <dbReference type="ChEBI" id="CHEBI:57792"/>
        <dbReference type="ChEBI" id="CHEBI:59776"/>
        <dbReference type="EC" id="2.2.1.7"/>
    </reaction>
</comment>
<comment type="cofactor">
    <cofactor evidence="1">
        <name>Mg(2+)</name>
        <dbReference type="ChEBI" id="CHEBI:18420"/>
    </cofactor>
    <text evidence="1">Binds 1 Mg(2+) ion per subunit.</text>
</comment>
<comment type="cofactor">
    <cofactor evidence="1">
        <name>thiamine diphosphate</name>
        <dbReference type="ChEBI" id="CHEBI:58937"/>
    </cofactor>
    <text evidence="1">Binds 1 thiamine pyrophosphate per subunit.</text>
</comment>
<comment type="pathway">
    <text evidence="1">Metabolic intermediate biosynthesis; 1-deoxy-D-xylulose 5-phosphate biosynthesis; 1-deoxy-D-xylulose 5-phosphate from D-glyceraldehyde 3-phosphate and pyruvate: step 1/1.</text>
</comment>
<comment type="subunit">
    <text evidence="1">Homodimer.</text>
</comment>
<comment type="similarity">
    <text evidence="1">Belongs to the transketolase family. DXPS subfamily.</text>
</comment>
<proteinExistence type="inferred from homology"/>
<organism>
    <name type="scientific">Mycobacterium tuberculosis (strain ATCC 25177 / H37Ra)</name>
    <dbReference type="NCBI Taxonomy" id="419947"/>
    <lineage>
        <taxon>Bacteria</taxon>
        <taxon>Bacillati</taxon>
        <taxon>Actinomycetota</taxon>
        <taxon>Actinomycetes</taxon>
        <taxon>Mycobacteriales</taxon>
        <taxon>Mycobacteriaceae</taxon>
        <taxon>Mycobacterium</taxon>
        <taxon>Mycobacterium tuberculosis complex</taxon>
    </lineage>
</organism>
<accession>A5U634</accession>